<protein>
    <recommendedName>
        <fullName evidence="1">Kynureninase</fullName>
        <ecNumber evidence="1">3.7.1.3</ecNumber>
    </recommendedName>
    <alternativeName>
        <fullName evidence="1">L-kynurenine hydrolase</fullName>
    </alternativeName>
</protein>
<evidence type="ECO:0000255" key="1">
    <source>
        <dbReference type="HAMAP-Rule" id="MF_01970"/>
    </source>
</evidence>
<comment type="function">
    <text evidence="1">Catalyzes the cleavage of L-kynurenine (L-Kyn) and L-3-hydroxykynurenine (L-3OHKyn) into anthranilic acid (AA) and 3-hydroxyanthranilic acid (3-OHAA), respectively.</text>
</comment>
<comment type="catalytic activity">
    <reaction evidence="1">
        <text>L-kynurenine + H2O = anthranilate + L-alanine + H(+)</text>
        <dbReference type="Rhea" id="RHEA:16813"/>
        <dbReference type="ChEBI" id="CHEBI:15377"/>
        <dbReference type="ChEBI" id="CHEBI:15378"/>
        <dbReference type="ChEBI" id="CHEBI:16567"/>
        <dbReference type="ChEBI" id="CHEBI:57959"/>
        <dbReference type="ChEBI" id="CHEBI:57972"/>
        <dbReference type="EC" id="3.7.1.3"/>
    </reaction>
</comment>
<comment type="catalytic activity">
    <reaction evidence="1">
        <text>3-hydroxy-L-kynurenine + H2O = 3-hydroxyanthranilate + L-alanine + H(+)</text>
        <dbReference type="Rhea" id="RHEA:25143"/>
        <dbReference type="ChEBI" id="CHEBI:15377"/>
        <dbReference type="ChEBI" id="CHEBI:15378"/>
        <dbReference type="ChEBI" id="CHEBI:36559"/>
        <dbReference type="ChEBI" id="CHEBI:57972"/>
        <dbReference type="ChEBI" id="CHEBI:58125"/>
        <dbReference type="EC" id="3.7.1.3"/>
    </reaction>
</comment>
<comment type="cofactor">
    <cofactor evidence="1">
        <name>pyridoxal 5'-phosphate</name>
        <dbReference type="ChEBI" id="CHEBI:597326"/>
    </cofactor>
</comment>
<comment type="pathway">
    <text evidence="1">Amino-acid degradation; L-kynurenine degradation; L-alanine and anthranilate from L-kynurenine: step 1/1.</text>
</comment>
<comment type="pathway">
    <text evidence="1">Cofactor biosynthesis; NAD(+) biosynthesis; quinolinate from L-kynurenine: step 2/3.</text>
</comment>
<comment type="subunit">
    <text evidence="1">Homodimer.</text>
</comment>
<comment type="similarity">
    <text evidence="1">Belongs to the kynureninase family.</text>
</comment>
<sequence length="410" mass="43890">MTTLLPALDLAQLDALDARDPLAHKRAEFDLPGDIIYLDGNSLGALPRRVPARLSQVATEEWGHHLIRSWTRNAEAAQDWMALPDRVAAKLAPLLGAGAHEVAVGDSTSVNTFKALAAALRLSGRRVILSDADNFPTDLYVAQGLARLLGDVEVRTAPGDEMTQHFTDDVGVVLLTEVDYRTGRRLDMRAITAAAHARGIVTVWDLAHSAGAFAVDLGGAGADFAIGCGYKFLNGGPGAPAFLYVAERHLDRAEVVLSGWMGHADPFEMARAYAPAPGARRFVVGTPQVLSLSALDAALDVFGDVDLGALREKSLSLTDTFIRLMEPLAEQYPLELVTPLAHAERGSQVSYRHPHAQQVMAQLIECGIVGDFRTPDILRFGFTPLYLSHGDVGRAVAGIAAVLDELEGPA</sequence>
<accession>Q9RYH5</accession>
<proteinExistence type="inferred from homology"/>
<feature type="chain" id="PRO_0000357003" description="Kynureninase">
    <location>
        <begin position="1"/>
        <end position="410"/>
    </location>
</feature>
<feature type="binding site" evidence="1">
    <location>
        <position position="108"/>
    </location>
    <ligand>
        <name>pyridoxal 5'-phosphate</name>
        <dbReference type="ChEBI" id="CHEBI:597326"/>
    </ligand>
</feature>
<feature type="binding site" evidence="1">
    <location>
        <position position="109"/>
    </location>
    <ligand>
        <name>pyridoxal 5'-phosphate</name>
        <dbReference type="ChEBI" id="CHEBI:597326"/>
    </ligand>
</feature>
<feature type="binding site" evidence="1">
    <location>
        <begin position="135"/>
        <end position="138"/>
    </location>
    <ligand>
        <name>pyridoxal 5'-phosphate</name>
        <dbReference type="ChEBI" id="CHEBI:597326"/>
    </ligand>
</feature>
<feature type="binding site" evidence="1">
    <location>
        <position position="176"/>
    </location>
    <ligand>
        <name>pyridoxal 5'-phosphate</name>
        <dbReference type="ChEBI" id="CHEBI:597326"/>
    </ligand>
</feature>
<feature type="binding site" evidence="1">
    <location>
        <position position="205"/>
    </location>
    <ligand>
        <name>pyridoxal 5'-phosphate</name>
        <dbReference type="ChEBI" id="CHEBI:597326"/>
    </ligand>
</feature>
<feature type="binding site" evidence="1">
    <location>
        <position position="208"/>
    </location>
    <ligand>
        <name>pyridoxal 5'-phosphate</name>
        <dbReference type="ChEBI" id="CHEBI:597326"/>
    </ligand>
</feature>
<feature type="binding site" evidence="1">
    <location>
        <position position="230"/>
    </location>
    <ligand>
        <name>pyridoxal 5'-phosphate</name>
        <dbReference type="ChEBI" id="CHEBI:597326"/>
    </ligand>
</feature>
<feature type="binding site" evidence="1">
    <location>
        <position position="260"/>
    </location>
    <ligand>
        <name>pyridoxal 5'-phosphate</name>
        <dbReference type="ChEBI" id="CHEBI:597326"/>
    </ligand>
</feature>
<feature type="binding site" evidence="1">
    <location>
        <position position="286"/>
    </location>
    <ligand>
        <name>pyridoxal 5'-phosphate</name>
        <dbReference type="ChEBI" id="CHEBI:597326"/>
    </ligand>
</feature>
<feature type="modified residue" description="N6-(pyridoxal phosphate)lysine" evidence="1">
    <location>
        <position position="231"/>
    </location>
</feature>
<dbReference type="EC" id="3.7.1.3" evidence="1"/>
<dbReference type="EMBL" id="AE001825">
    <property type="protein sequence ID" value="AAF12444.1"/>
    <property type="molecule type" value="Genomic_DNA"/>
</dbReference>
<dbReference type="PIR" id="F75588">
    <property type="entry name" value="F75588"/>
</dbReference>
<dbReference type="RefSeq" id="NP_285661.1">
    <property type="nucleotide sequence ID" value="NC_001264.1"/>
</dbReference>
<dbReference type="RefSeq" id="WP_027480133.1">
    <property type="nucleotide sequence ID" value="NC_001264.1"/>
</dbReference>
<dbReference type="SMR" id="Q9RYH5"/>
<dbReference type="FunCoup" id="Q9RYH5">
    <property type="interactions" value="38"/>
</dbReference>
<dbReference type="STRING" id="243230.DR_A0338"/>
<dbReference type="PaxDb" id="243230-DR_A0338"/>
<dbReference type="EnsemblBacteria" id="AAF12444">
    <property type="protein sequence ID" value="AAF12444"/>
    <property type="gene ID" value="DR_A0338"/>
</dbReference>
<dbReference type="GeneID" id="69519222"/>
<dbReference type="KEGG" id="dra:DR_A0338"/>
<dbReference type="PATRIC" id="fig|243230.17.peg.3230"/>
<dbReference type="eggNOG" id="COG3844">
    <property type="taxonomic scope" value="Bacteria"/>
</dbReference>
<dbReference type="HOGENOM" id="CLU_003433_4_1_0"/>
<dbReference type="InParanoid" id="Q9RYH5"/>
<dbReference type="OrthoDB" id="9812626at2"/>
<dbReference type="UniPathway" id="UPA00253">
    <property type="reaction ID" value="UER00329"/>
</dbReference>
<dbReference type="UniPathway" id="UPA00334">
    <property type="reaction ID" value="UER00455"/>
</dbReference>
<dbReference type="Proteomes" id="UP000002524">
    <property type="component" value="Chromosome 2"/>
</dbReference>
<dbReference type="GO" id="GO:0005737">
    <property type="term" value="C:cytoplasm"/>
    <property type="evidence" value="ECO:0000318"/>
    <property type="project" value="GO_Central"/>
</dbReference>
<dbReference type="GO" id="GO:0030429">
    <property type="term" value="F:kynureninase activity"/>
    <property type="evidence" value="ECO:0000318"/>
    <property type="project" value="GO_Central"/>
</dbReference>
<dbReference type="GO" id="GO:0030170">
    <property type="term" value="F:pyridoxal phosphate binding"/>
    <property type="evidence" value="ECO:0007669"/>
    <property type="project" value="UniProtKB-UniRule"/>
</dbReference>
<dbReference type="GO" id="GO:0043420">
    <property type="term" value="P:anthranilate metabolic process"/>
    <property type="evidence" value="ECO:0000318"/>
    <property type="project" value="GO_Central"/>
</dbReference>
<dbReference type="GO" id="GO:0097053">
    <property type="term" value="P:L-kynurenine catabolic process"/>
    <property type="evidence" value="ECO:0007669"/>
    <property type="project" value="UniProtKB-UniRule"/>
</dbReference>
<dbReference type="GO" id="GO:0019441">
    <property type="term" value="P:L-tryptophan catabolic process to kynurenine"/>
    <property type="evidence" value="ECO:0000318"/>
    <property type="project" value="GO_Central"/>
</dbReference>
<dbReference type="GO" id="GO:0009435">
    <property type="term" value="P:NAD biosynthetic process"/>
    <property type="evidence" value="ECO:0007669"/>
    <property type="project" value="UniProtKB-UniPathway"/>
</dbReference>
<dbReference type="GO" id="GO:0019805">
    <property type="term" value="P:quinolinate biosynthetic process"/>
    <property type="evidence" value="ECO:0007669"/>
    <property type="project" value="UniProtKB-UniRule"/>
</dbReference>
<dbReference type="FunFam" id="3.40.640.10:FF:000107">
    <property type="entry name" value="Kynureninase"/>
    <property type="match status" value="1"/>
</dbReference>
<dbReference type="Gene3D" id="3.90.1150.10">
    <property type="entry name" value="Aspartate Aminotransferase, domain 1"/>
    <property type="match status" value="1"/>
</dbReference>
<dbReference type="Gene3D" id="3.40.640.10">
    <property type="entry name" value="Type I PLP-dependent aspartate aminotransferase-like (Major domain)"/>
    <property type="match status" value="1"/>
</dbReference>
<dbReference type="HAMAP" id="MF_01970">
    <property type="entry name" value="Kynureninase"/>
    <property type="match status" value="1"/>
</dbReference>
<dbReference type="InterPro" id="IPR010111">
    <property type="entry name" value="Kynureninase"/>
</dbReference>
<dbReference type="InterPro" id="IPR015424">
    <property type="entry name" value="PyrdxlP-dep_Trfase"/>
</dbReference>
<dbReference type="InterPro" id="IPR015421">
    <property type="entry name" value="PyrdxlP-dep_Trfase_major"/>
</dbReference>
<dbReference type="InterPro" id="IPR015422">
    <property type="entry name" value="PyrdxlP-dep_Trfase_small"/>
</dbReference>
<dbReference type="NCBIfam" id="TIGR01814">
    <property type="entry name" value="kynureninase"/>
    <property type="match status" value="1"/>
</dbReference>
<dbReference type="PANTHER" id="PTHR14084">
    <property type="entry name" value="KYNURENINASE"/>
    <property type="match status" value="1"/>
</dbReference>
<dbReference type="PANTHER" id="PTHR14084:SF0">
    <property type="entry name" value="KYNURENINASE"/>
    <property type="match status" value="1"/>
</dbReference>
<dbReference type="Pfam" id="PF22580">
    <property type="entry name" value="KYNU_C"/>
    <property type="match status" value="1"/>
</dbReference>
<dbReference type="PIRSF" id="PIRSF038800">
    <property type="entry name" value="KYNU"/>
    <property type="match status" value="1"/>
</dbReference>
<dbReference type="SUPFAM" id="SSF53383">
    <property type="entry name" value="PLP-dependent transferases"/>
    <property type="match status" value="1"/>
</dbReference>
<name>KYNU_DEIRA</name>
<organism>
    <name type="scientific">Deinococcus radiodurans (strain ATCC 13939 / DSM 20539 / JCM 16871 / CCUG 27074 / LMG 4051 / NBRC 15346 / NCIMB 9279 / VKM B-1422 / R1)</name>
    <dbReference type="NCBI Taxonomy" id="243230"/>
    <lineage>
        <taxon>Bacteria</taxon>
        <taxon>Thermotogati</taxon>
        <taxon>Deinococcota</taxon>
        <taxon>Deinococci</taxon>
        <taxon>Deinococcales</taxon>
        <taxon>Deinococcaceae</taxon>
        <taxon>Deinococcus</taxon>
    </lineage>
</organism>
<reference key="1">
    <citation type="journal article" date="1999" name="Science">
        <title>Genome sequence of the radioresistant bacterium Deinococcus radiodurans R1.</title>
        <authorList>
            <person name="White O."/>
            <person name="Eisen J.A."/>
            <person name="Heidelberg J.F."/>
            <person name="Hickey E.K."/>
            <person name="Peterson J.D."/>
            <person name="Dodson R.J."/>
            <person name="Haft D.H."/>
            <person name="Gwinn M.L."/>
            <person name="Nelson W.C."/>
            <person name="Richardson D.L."/>
            <person name="Moffat K.S."/>
            <person name="Qin H."/>
            <person name="Jiang L."/>
            <person name="Pamphile W."/>
            <person name="Crosby M."/>
            <person name="Shen M."/>
            <person name="Vamathevan J.J."/>
            <person name="Lam P."/>
            <person name="McDonald L.A."/>
            <person name="Utterback T.R."/>
            <person name="Zalewski C."/>
            <person name="Makarova K.S."/>
            <person name="Aravind L."/>
            <person name="Daly M.J."/>
            <person name="Minton K.W."/>
            <person name="Fleischmann R.D."/>
            <person name="Ketchum K.A."/>
            <person name="Nelson K.E."/>
            <person name="Salzberg S.L."/>
            <person name="Smith H.O."/>
            <person name="Venter J.C."/>
            <person name="Fraser C.M."/>
        </authorList>
    </citation>
    <scope>NUCLEOTIDE SEQUENCE [LARGE SCALE GENOMIC DNA]</scope>
    <source>
        <strain>ATCC 13939 / DSM 20539 / JCM 16871 / CCUG 27074 / LMG 4051 / NBRC 15346 / NCIMB 9279 / VKM B-1422 / R1</strain>
    </source>
</reference>
<keyword id="KW-0378">Hydrolase</keyword>
<keyword id="KW-0662">Pyridine nucleotide biosynthesis</keyword>
<keyword id="KW-0663">Pyridoxal phosphate</keyword>
<keyword id="KW-1185">Reference proteome</keyword>
<gene>
    <name evidence="1" type="primary">kynU</name>
    <name type="ordered locus">DR_A0338</name>
</gene>